<dbReference type="EMBL" id="CP000255">
    <property type="protein sequence ID" value="ABD22355.1"/>
    <property type="molecule type" value="Genomic_DNA"/>
</dbReference>
<dbReference type="RefSeq" id="WP_000645452.1">
    <property type="nucleotide sequence ID" value="NZ_CP027476.1"/>
</dbReference>
<dbReference type="SMR" id="Q2FK09"/>
<dbReference type="KEGG" id="saa:SAUSA300_0255"/>
<dbReference type="HOGENOM" id="CLU_000445_14_1_9"/>
<dbReference type="OMA" id="HEDFAVQ"/>
<dbReference type="Proteomes" id="UP000001939">
    <property type="component" value="Chromosome"/>
</dbReference>
<dbReference type="GO" id="GO:0005737">
    <property type="term" value="C:cytoplasm"/>
    <property type="evidence" value="ECO:0007669"/>
    <property type="project" value="UniProtKB-SubCell"/>
</dbReference>
<dbReference type="GO" id="GO:0003677">
    <property type="term" value="F:DNA binding"/>
    <property type="evidence" value="ECO:0007669"/>
    <property type="project" value="UniProtKB-KW"/>
</dbReference>
<dbReference type="GO" id="GO:0000156">
    <property type="term" value="F:phosphorelay response regulator activity"/>
    <property type="evidence" value="ECO:0007669"/>
    <property type="project" value="InterPro"/>
</dbReference>
<dbReference type="CDD" id="cd17532">
    <property type="entry name" value="REC_LytTR_AlgR-like"/>
    <property type="match status" value="1"/>
</dbReference>
<dbReference type="FunFam" id="3.40.50.2300:FF:000134">
    <property type="entry name" value="Autolysin response regulator LytR"/>
    <property type="match status" value="1"/>
</dbReference>
<dbReference type="Gene3D" id="3.40.50.2300">
    <property type="match status" value="1"/>
</dbReference>
<dbReference type="Gene3D" id="2.40.50.1020">
    <property type="entry name" value="LytTr DNA-binding domain"/>
    <property type="match status" value="1"/>
</dbReference>
<dbReference type="InterPro" id="IPR011006">
    <property type="entry name" value="CheY-like_superfamily"/>
</dbReference>
<dbReference type="InterPro" id="IPR046947">
    <property type="entry name" value="LytR-like"/>
</dbReference>
<dbReference type="InterPro" id="IPR007492">
    <property type="entry name" value="LytTR_DNA-bd_dom"/>
</dbReference>
<dbReference type="InterPro" id="IPR001789">
    <property type="entry name" value="Sig_transdc_resp-reg_receiver"/>
</dbReference>
<dbReference type="NCBIfam" id="NF010684">
    <property type="entry name" value="PRK14084.1"/>
    <property type="match status" value="1"/>
</dbReference>
<dbReference type="PANTHER" id="PTHR37299:SF1">
    <property type="entry name" value="STAGE 0 SPORULATION PROTEIN A HOMOLOG"/>
    <property type="match status" value="1"/>
</dbReference>
<dbReference type="PANTHER" id="PTHR37299">
    <property type="entry name" value="TRANSCRIPTIONAL REGULATOR-RELATED"/>
    <property type="match status" value="1"/>
</dbReference>
<dbReference type="Pfam" id="PF04397">
    <property type="entry name" value="LytTR"/>
    <property type="match status" value="1"/>
</dbReference>
<dbReference type="Pfam" id="PF00072">
    <property type="entry name" value="Response_reg"/>
    <property type="match status" value="1"/>
</dbReference>
<dbReference type="SMART" id="SM00850">
    <property type="entry name" value="LytTR"/>
    <property type="match status" value="1"/>
</dbReference>
<dbReference type="SMART" id="SM00448">
    <property type="entry name" value="REC"/>
    <property type="match status" value="1"/>
</dbReference>
<dbReference type="SUPFAM" id="SSF52172">
    <property type="entry name" value="CheY-like"/>
    <property type="match status" value="1"/>
</dbReference>
<dbReference type="PROSITE" id="PS50930">
    <property type="entry name" value="HTH_LYTTR"/>
    <property type="match status" value="1"/>
</dbReference>
<dbReference type="PROSITE" id="PS50110">
    <property type="entry name" value="RESPONSE_REGULATORY"/>
    <property type="match status" value="1"/>
</dbReference>
<gene>
    <name type="primary">lytR</name>
    <name type="ordered locus">SAUSA300_0255</name>
</gene>
<name>LYTR_STAA3</name>
<feature type="chain" id="PRO_0000291853" description="Transcriptional regulatory protein LytR">
    <location>
        <begin position="1"/>
        <end position="246"/>
    </location>
</feature>
<feature type="domain" description="Response regulatory" evidence="5">
    <location>
        <begin position="2"/>
        <end position="116"/>
    </location>
</feature>
<feature type="domain" description="HTH LytTR-type" evidence="4">
    <location>
        <begin position="141"/>
        <end position="245"/>
    </location>
</feature>
<feature type="modified residue" description="4-aspartylphosphate" evidence="5">
    <location>
        <position position="53"/>
    </location>
</feature>
<comment type="function">
    <text evidence="3">Member of the two-component regulatory system LytR/LytS that regulates genes involved in autolysis, programmed cell death, biofilm formation and cell wall metabolism. Also participates in sensing and responding to host defense cationic antimicrobial peptides (HDPs). Upon phosphorylation by LytS, functions as a transcription regulator by direct binding to promoter regions of target genes including lrgA and lrgB, to positively regulate their expression.</text>
</comment>
<comment type="subunit">
    <text evidence="2">Homodimer; when phosphorylated.</text>
</comment>
<comment type="subcellular location">
    <subcellularLocation>
        <location evidence="1">Cytoplasm</location>
    </subcellularLocation>
</comment>
<comment type="PTM">
    <text evidence="2">Phosphorylated and dephosphorylated by LytS.</text>
</comment>
<organism>
    <name type="scientific">Staphylococcus aureus (strain USA300)</name>
    <dbReference type="NCBI Taxonomy" id="367830"/>
    <lineage>
        <taxon>Bacteria</taxon>
        <taxon>Bacillati</taxon>
        <taxon>Bacillota</taxon>
        <taxon>Bacilli</taxon>
        <taxon>Bacillales</taxon>
        <taxon>Staphylococcaceae</taxon>
        <taxon>Staphylococcus</taxon>
    </lineage>
</organism>
<accession>Q2FK09</accession>
<evidence type="ECO:0000250" key="1"/>
<evidence type="ECO:0000250" key="2">
    <source>
        <dbReference type="UniProtKB" id="P60609"/>
    </source>
</evidence>
<evidence type="ECO:0000250" key="3">
    <source>
        <dbReference type="UniProtKB" id="P60611"/>
    </source>
</evidence>
<evidence type="ECO:0000255" key="4">
    <source>
        <dbReference type="PROSITE-ProRule" id="PRU00112"/>
    </source>
</evidence>
<evidence type="ECO:0000255" key="5">
    <source>
        <dbReference type="PROSITE-ProRule" id="PRU00169"/>
    </source>
</evidence>
<protein>
    <recommendedName>
        <fullName>Transcriptional regulatory protein LytR</fullName>
    </recommendedName>
    <alternativeName>
        <fullName>Sensory transduction protein LytR</fullName>
    </alternativeName>
</protein>
<keyword id="KW-0963">Cytoplasm</keyword>
<keyword id="KW-0238">DNA-binding</keyword>
<keyword id="KW-0597">Phosphoprotein</keyword>
<keyword id="KW-0804">Transcription</keyword>
<keyword id="KW-0805">Transcription regulation</keyword>
<keyword id="KW-0902">Two-component regulatory system</keyword>
<sequence length="246" mass="28221">MKALIIDDEPLARNELTYLLNEIGGFEEINEAENVKETLEALLINQYDIIFLDVNLMDENGIELGAKIQKMKEPPAIIFATAHDQYAVQAFELNATDYILKPFGQKRIEQAVNKVRATKAKDDNNASAIANDMSANFDQSLPVEIDDKIHMLKQQNIIGIGTHNGITTIHTTNHKYETTEPLNRYEKRLNPTYFIRIHRSYIINTKHIKEVQQWFNYTYMVILTNGVKMQVGRSFMKDFKASIGLL</sequence>
<reference key="1">
    <citation type="journal article" date="2006" name="Lancet">
        <title>Complete genome sequence of USA300, an epidemic clone of community-acquired meticillin-resistant Staphylococcus aureus.</title>
        <authorList>
            <person name="Diep B.A."/>
            <person name="Gill S.R."/>
            <person name="Chang R.F."/>
            <person name="Phan T.H."/>
            <person name="Chen J.H."/>
            <person name="Davidson M.G."/>
            <person name="Lin F."/>
            <person name="Lin J."/>
            <person name="Carleton H.A."/>
            <person name="Mongodin E.F."/>
            <person name="Sensabaugh G.F."/>
            <person name="Perdreau-Remington F."/>
        </authorList>
    </citation>
    <scope>NUCLEOTIDE SEQUENCE [LARGE SCALE GENOMIC DNA]</scope>
    <source>
        <strain>USA300</strain>
    </source>
</reference>
<proteinExistence type="inferred from homology"/>